<evidence type="ECO:0000250" key="1"/>
<evidence type="ECO:0000255" key="2"/>
<evidence type="ECO:0000269" key="3">
    <source>
    </source>
</evidence>
<evidence type="ECO:0000269" key="4">
    <source>
    </source>
</evidence>
<evidence type="ECO:0000305" key="5"/>
<feature type="transit peptide" description="Mitochondrion" evidence="2">
    <location>
        <begin position="1"/>
        <end status="unknown"/>
    </location>
</feature>
<feature type="chain" id="PRO_0000324180" description="Electron transfer flavoprotein subunit beta, mitochondrial">
    <location>
        <begin status="unknown"/>
        <end position="251"/>
    </location>
</feature>
<feature type="splice variant" id="VSP_032173" description="In isoform 3." evidence="5">
    <location>
        <begin position="1"/>
        <end position="32"/>
    </location>
</feature>
<feature type="splice variant" id="VSP_032174" description="In isoform 2." evidence="5">
    <original>T</original>
    <variation>S</variation>
    <location>
        <position position="178"/>
    </location>
</feature>
<feature type="splice variant" id="VSP_032175" description="In isoform 2." evidence="5">
    <location>
        <begin position="179"/>
        <end position="251"/>
    </location>
</feature>
<feature type="sequence conflict" description="In Ref. 4; AAM61464." evidence="5" ref="4">
    <original>I</original>
    <variation>S</variation>
    <location>
        <position position="91"/>
    </location>
</feature>
<keyword id="KW-0025">Alternative splicing</keyword>
<keyword id="KW-0249">Electron transport</keyword>
<keyword id="KW-0274">FAD</keyword>
<keyword id="KW-0285">Flavoprotein</keyword>
<keyword id="KW-0496">Mitochondrion</keyword>
<keyword id="KW-1185">Reference proteome</keyword>
<keyword id="KW-0809">Transit peptide</keyword>
<keyword id="KW-0813">Transport</keyword>
<accession>Q9LSW8</accession>
<accession>A8MRD3</accession>
<accession>Q2V317</accession>
<accession>Q8LFE0</accession>
<comment type="function">
    <text evidence="1 4">The electron transfer flavoprotein serves as a specific electron acceptor for several dehydrogenases, including five acyl-CoA dehydrogenases, glutaryl-CoA and sarcosine dehydrogenase. It transfers the electrons to the main mitochondrial respiratory chain via ETF-ubiquinone oxidoreductase (ETF dehydrogenase) (By similarity). Involved in leucine catabolism and in phytol degradation.</text>
</comment>
<comment type="cofactor">
    <cofactor evidence="1">
        <name>FAD</name>
        <dbReference type="ChEBI" id="CHEBI:57692"/>
    </cofactor>
    <text evidence="1">Binds 1 FAD per dimer.</text>
</comment>
<comment type="cofactor">
    <cofactor evidence="1">
        <name>AMP</name>
        <dbReference type="ChEBI" id="CHEBI:456215"/>
    </cofactor>
    <text evidence="1">Binds 1 AMP per subunit.</text>
</comment>
<comment type="subunit">
    <text>Heterodimer of an alpha and a beta subunit.</text>
</comment>
<comment type="subcellular location">
    <subcellularLocation>
        <location evidence="3">Mitochondrion matrix</location>
    </subcellularLocation>
</comment>
<comment type="alternative products">
    <event type="alternative splicing"/>
    <isoform>
        <id>Q9LSW8-1</id>
        <name>1</name>
        <sequence type="displayed"/>
    </isoform>
    <isoform>
        <id>Q9LSW8-2</id>
        <name>2</name>
        <sequence type="described" ref="VSP_032174 VSP_032175"/>
    </isoform>
    <isoform>
        <id>Q9LSW8-3</id>
        <name>3</name>
        <sequence type="described" ref="VSP_032173"/>
    </isoform>
</comment>
<comment type="induction">
    <text evidence="4">Expressed constitutively. Not induced by dark treatment or sucrose starvation.</text>
</comment>
<comment type="disruption phenotype">
    <text evidence="4">Reduced plant viability on extended exposure to darkness and a reduced reproductive performance under normal growth conditions.</text>
</comment>
<comment type="similarity">
    <text evidence="5">Belongs to the ETF beta-subunit/FixA family.</text>
</comment>
<reference key="1">
    <citation type="journal article" date="2000" name="DNA Res.">
        <title>Structural analysis of Arabidopsis thaliana chromosome 5. X. Sequence features of the regions of 3,076,755 bp covered by sixty P1 and TAC clones.</title>
        <authorList>
            <person name="Sato S."/>
            <person name="Nakamura Y."/>
            <person name="Kaneko T."/>
            <person name="Katoh T."/>
            <person name="Asamizu E."/>
            <person name="Kotani H."/>
            <person name="Tabata S."/>
        </authorList>
    </citation>
    <scope>NUCLEOTIDE SEQUENCE [LARGE SCALE GENOMIC DNA]</scope>
    <source>
        <strain>cv. Columbia</strain>
    </source>
</reference>
<reference key="2">
    <citation type="journal article" date="2017" name="Plant J.">
        <title>Araport11: a complete reannotation of the Arabidopsis thaliana reference genome.</title>
        <authorList>
            <person name="Cheng C.Y."/>
            <person name="Krishnakumar V."/>
            <person name="Chan A.P."/>
            <person name="Thibaud-Nissen F."/>
            <person name="Schobel S."/>
            <person name="Town C.D."/>
        </authorList>
    </citation>
    <scope>GENOME REANNOTATION</scope>
    <source>
        <strain>cv. Columbia</strain>
    </source>
</reference>
<reference key="3">
    <citation type="journal article" date="2003" name="Science">
        <title>Empirical analysis of transcriptional activity in the Arabidopsis genome.</title>
        <authorList>
            <person name="Yamada K."/>
            <person name="Lim J."/>
            <person name="Dale J.M."/>
            <person name="Chen H."/>
            <person name="Shinn P."/>
            <person name="Palm C.J."/>
            <person name="Southwick A.M."/>
            <person name="Wu H.C."/>
            <person name="Kim C.J."/>
            <person name="Nguyen M."/>
            <person name="Pham P.K."/>
            <person name="Cheuk R.F."/>
            <person name="Karlin-Newmann G."/>
            <person name="Liu S.X."/>
            <person name="Lam B."/>
            <person name="Sakano H."/>
            <person name="Wu T."/>
            <person name="Yu G."/>
            <person name="Miranda M."/>
            <person name="Quach H.L."/>
            <person name="Tripp M."/>
            <person name="Chang C.H."/>
            <person name="Lee J.M."/>
            <person name="Toriumi M.J."/>
            <person name="Chan M.M."/>
            <person name="Tang C.C."/>
            <person name="Onodera C.S."/>
            <person name="Deng J.M."/>
            <person name="Akiyama K."/>
            <person name="Ansari Y."/>
            <person name="Arakawa T."/>
            <person name="Banh J."/>
            <person name="Banno F."/>
            <person name="Bowser L."/>
            <person name="Brooks S.Y."/>
            <person name="Carninci P."/>
            <person name="Chao Q."/>
            <person name="Choy N."/>
            <person name="Enju A."/>
            <person name="Goldsmith A.D."/>
            <person name="Gurjal M."/>
            <person name="Hansen N.F."/>
            <person name="Hayashizaki Y."/>
            <person name="Johnson-Hopson C."/>
            <person name="Hsuan V.W."/>
            <person name="Iida K."/>
            <person name="Karnes M."/>
            <person name="Khan S."/>
            <person name="Koesema E."/>
            <person name="Ishida J."/>
            <person name="Jiang P.X."/>
            <person name="Jones T."/>
            <person name="Kawai J."/>
            <person name="Kamiya A."/>
            <person name="Meyers C."/>
            <person name="Nakajima M."/>
            <person name="Narusaka M."/>
            <person name="Seki M."/>
            <person name="Sakurai T."/>
            <person name="Satou M."/>
            <person name="Tamse R."/>
            <person name="Vaysberg M."/>
            <person name="Wallender E.K."/>
            <person name="Wong C."/>
            <person name="Yamamura Y."/>
            <person name="Yuan S."/>
            <person name="Shinozaki K."/>
            <person name="Davis R.W."/>
            <person name="Theologis A."/>
            <person name="Ecker J.R."/>
        </authorList>
    </citation>
    <scope>NUCLEOTIDE SEQUENCE [LARGE SCALE MRNA] (ISOFORM 1)</scope>
    <source>
        <strain>cv. Columbia</strain>
    </source>
</reference>
<reference key="4">
    <citation type="submission" date="2002-03" db="EMBL/GenBank/DDBJ databases">
        <title>Full-length cDNA from Arabidopsis thaliana.</title>
        <authorList>
            <person name="Brover V.V."/>
            <person name="Troukhan M.E."/>
            <person name="Alexandrov N.A."/>
            <person name="Lu Y.-P."/>
            <person name="Flavell R.B."/>
            <person name="Feldmann K.A."/>
        </authorList>
    </citation>
    <scope>NUCLEOTIDE SEQUENCE [LARGE SCALE MRNA] (ISOFORM 1)</scope>
</reference>
<reference key="5">
    <citation type="journal article" date="2004" name="Plant Cell">
        <title>Experimental analysis of the Arabidopsis mitochondrial proteome highlights signaling and regulatory components, provides assessment of targeting prediction programs, and indicates plant-specific mitochondrial proteins.</title>
        <authorList>
            <person name="Heazlewood J.L."/>
            <person name="Tonti-Filippini J.S."/>
            <person name="Gout A.M."/>
            <person name="Day D.A."/>
            <person name="Whelan J."/>
            <person name="Millar A.H."/>
        </authorList>
    </citation>
    <scope>IDENTIFICATION BY MASS SPECTROMETRY</scope>
    <scope>SUBCELLULAR LOCATION [LARGE SCALE ANALYSIS]</scope>
    <source>
        <strain>cv. Landsberg erecta</strain>
    </source>
</reference>
<reference key="6">
    <citation type="journal article" date="2006" name="Plant J.">
        <title>The mitochondrial electron transfer flavoprotein complex is essential for survival of Arabidopsis in extended darkness.</title>
        <authorList>
            <person name="Ishizaki K."/>
            <person name="Schauer N."/>
            <person name="Larson T.R."/>
            <person name="Graham I.A."/>
            <person name="Fernie A.R."/>
            <person name="Leaver C.J."/>
        </authorList>
    </citation>
    <scope>FUNCTION</scope>
    <scope>INDUCTION</scope>
    <scope>INTERACTION WITH ETFA</scope>
    <scope>DISRUPTION PHENOTYPE</scope>
</reference>
<proteinExistence type="evidence at protein level"/>
<protein>
    <recommendedName>
        <fullName>Electron transfer flavoprotein subunit beta, mitochondrial</fullName>
        <shortName>Beta-ETF</shortName>
    </recommendedName>
</protein>
<dbReference type="EMBL" id="AB025638">
    <property type="protein sequence ID" value="BAA97422.1"/>
    <property type="molecule type" value="Genomic_DNA"/>
</dbReference>
<dbReference type="EMBL" id="CP002688">
    <property type="protein sequence ID" value="AED94960.1"/>
    <property type="molecule type" value="Genomic_DNA"/>
</dbReference>
<dbReference type="EMBL" id="CP002688">
    <property type="protein sequence ID" value="AED94961.1"/>
    <property type="molecule type" value="Genomic_DNA"/>
</dbReference>
<dbReference type="EMBL" id="CP002688">
    <property type="protein sequence ID" value="AED94962.1"/>
    <property type="molecule type" value="Genomic_DNA"/>
</dbReference>
<dbReference type="EMBL" id="AY045657">
    <property type="protein sequence ID" value="AAK74015.1"/>
    <property type="molecule type" value="mRNA"/>
</dbReference>
<dbReference type="EMBL" id="AF446867">
    <property type="protein sequence ID" value="AAL38600.1"/>
    <property type="molecule type" value="mRNA"/>
</dbReference>
<dbReference type="EMBL" id="AY084901">
    <property type="protein sequence ID" value="AAM61464.1"/>
    <property type="molecule type" value="mRNA"/>
</dbReference>
<dbReference type="RefSeq" id="NP_001032002.1">
    <molecule id="Q9LSW8-2"/>
    <property type="nucleotide sequence ID" value="NM_001036925.2"/>
</dbReference>
<dbReference type="RefSeq" id="NP_001078699.1">
    <molecule id="Q9LSW8-3"/>
    <property type="nucleotide sequence ID" value="NM_001085230.2"/>
</dbReference>
<dbReference type="RefSeq" id="NP_199156.1">
    <molecule id="Q9LSW8-1"/>
    <property type="nucleotide sequence ID" value="NM_123709.4"/>
</dbReference>
<dbReference type="SMR" id="Q9LSW8"/>
<dbReference type="BioGRID" id="19613">
    <property type="interactions" value="1"/>
</dbReference>
<dbReference type="FunCoup" id="Q9LSW8">
    <property type="interactions" value="2685"/>
</dbReference>
<dbReference type="IntAct" id="Q9LSW8">
    <property type="interactions" value="2"/>
</dbReference>
<dbReference type="STRING" id="3702.Q9LSW8"/>
<dbReference type="iPTMnet" id="Q9LSW8"/>
<dbReference type="PaxDb" id="3702-AT5G43430.1"/>
<dbReference type="ProteomicsDB" id="220595">
    <molecule id="Q9LSW8-1"/>
</dbReference>
<dbReference type="EnsemblPlants" id="AT5G43430.1">
    <molecule id="Q9LSW8-1"/>
    <property type="protein sequence ID" value="AT5G43430.1"/>
    <property type="gene ID" value="AT5G43430"/>
</dbReference>
<dbReference type="EnsemblPlants" id="AT5G43430.2">
    <molecule id="Q9LSW8-2"/>
    <property type="protein sequence ID" value="AT5G43430.2"/>
    <property type="gene ID" value="AT5G43430"/>
</dbReference>
<dbReference type="EnsemblPlants" id="AT5G43430.3">
    <molecule id="Q9LSW8-3"/>
    <property type="protein sequence ID" value="AT5G43430.3"/>
    <property type="gene ID" value="AT5G43430"/>
</dbReference>
<dbReference type="GeneID" id="834363"/>
<dbReference type="Gramene" id="AT5G43430.1">
    <molecule id="Q9LSW8-1"/>
    <property type="protein sequence ID" value="AT5G43430.1"/>
    <property type="gene ID" value="AT5G43430"/>
</dbReference>
<dbReference type="Gramene" id="AT5G43430.2">
    <molecule id="Q9LSW8-2"/>
    <property type="protein sequence ID" value="AT5G43430.2"/>
    <property type="gene ID" value="AT5G43430"/>
</dbReference>
<dbReference type="Gramene" id="AT5G43430.3">
    <molecule id="Q9LSW8-3"/>
    <property type="protein sequence ID" value="AT5G43430.3"/>
    <property type="gene ID" value="AT5G43430"/>
</dbReference>
<dbReference type="KEGG" id="ath:AT5G43430"/>
<dbReference type="Araport" id="AT5G43430"/>
<dbReference type="TAIR" id="AT5G43430">
    <property type="gene designation" value="ETFBETA"/>
</dbReference>
<dbReference type="eggNOG" id="KOG3180">
    <property type="taxonomic scope" value="Eukaryota"/>
</dbReference>
<dbReference type="HOGENOM" id="CLU_060196_0_0_1"/>
<dbReference type="InParanoid" id="Q9LSW8"/>
<dbReference type="OMA" id="EINQPRI"/>
<dbReference type="PhylomeDB" id="Q9LSW8"/>
<dbReference type="PRO" id="PR:Q9LSW8"/>
<dbReference type="Proteomes" id="UP000006548">
    <property type="component" value="Chromosome 5"/>
</dbReference>
<dbReference type="ExpressionAtlas" id="Q9LSW8">
    <property type="expression patterns" value="baseline and differential"/>
</dbReference>
<dbReference type="GO" id="GO:0005759">
    <property type="term" value="C:mitochondrial matrix"/>
    <property type="evidence" value="ECO:0007669"/>
    <property type="project" value="UniProtKB-SubCell"/>
</dbReference>
<dbReference type="GO" id="GO:0005739">
    <property type="term" value="C:mitochondrion"/>
    <property type="evidence" value="ECO:0000314"/>
    <property type="project" value="TAIR"/>
</dbReference>
<dbReference type="GO" id="GO:0009536">
    <property type="term" value="C:plastid"/>
    <property type="evidence" value="ECO:0007005"/>
    <property type="project" value="TAIR"/>
</dbReference>
<dbReference type="GO" id="GO:0009055">
    <property type="term" value="F:electron transfer activity"/>
    <property type="evidence" value="ECO:0007669"/>
    <property type="project" value="InterPro"/>
</dbReference>
<dbReference type="GO" id="GO:0015996">
    <property type="term" value="P:chlorophyll catabolic process"/>
    <property type="evidence" value="ECO:0000315"/>
    <property type="project" value="TAIR"/>
</dbReference>
<dbReference type="GO" id="GO:0006552">
    <property type="term" value="P:L-leucine catabolic process"/>
    <property type="evidence" value="ECO:0000315"/>
    <property type="project" value="TAIR"/>
</dbReference>
<dbReference type="CDD" id="cd01714">
    <property type="entry name" value="ETF_beta"/>
    <property type="match status" value="1"/>
</dbReference>
<dbReference type="FunFam" id="3.40.50.620:FF:000011">
    <property type="entry name" value="Electron transfer flavoprotein subunit beta"/>
    <property type="match status" value="1"/>
</dbReference>
<dbReference type="Gene3D" id="3.40.50.620">
    <property type="entry name" value="HUPs"/>
    <property type="match status" value="1"/>
</dbReference>
<dbReference type="InterPro" id="IPR000049">
    <property type="entry name" value="ET-Flavoprotein_bsu_CS"/>
</dbReference>
<dbReference type="InterPro" id="IPR014730">
    <property type="entry name" value="ETF_a/b_N"/>
</dbReference>
<dbReference type="InterPro" id="IPR012255">
    <property type="entry name" value="ETF_b"/>
</dbReference>
<dbReference type="InterPro" id="IPR033948">
    <property type="entry name" value="ETF_beta_N"/>
</dbReference>
<dbReference type="InterPro" id="IPR014729">
    <property type="entry name" value="Rossmann-like_a/b/a_fold"/>
</dbReference>
<dbReference type="PANTHER" id="PTHR21294">
    <property type="entry name" value="ELECTRON TRANSFER FLAVOPROTEIN BETA-SUBUNIT"/>
    <property type="match status" value="1"/>
</dbReference>
<dbReference type="PANTHER" id="PTHR21294:SF8">
    <property type="entry name" value="ELECTRON TRANSFER FLAVOPROTEIN SUBUNIT BETA"/>
    <property type="match status" value="1"/>
</dbReference>
<dbReference type="Pfam" id="PF01012">
    <property type="entry name" value="ETF"/>
    <property type="match status" value="1"/>
</dbReference>
<dbReference type="PIRSF" id="PIRSF000090">
    <property type="entry name" value="Beta-ETF"/>
    <property type="match status" value="1"/>
</dbReference>
<dbReference type="SMART" id="SM00893">
    <property type="entry name" value="ETF"/>
    <property type="match status" value="1"/>
</dbReference>
<dbReference type="SUPFAM" id="SSF52402">
    <property type="entry name" value="Adenine nucleotide alpha hydrolases-like"/>
    <property type="match status" value="1"/>
</dbReference>
<dbReference type="PROSITE" id="PS01065">
    <property type="entry name" value="ETF_BETA"/>
    <property type="match status" value="1"/>
</dbReference>
<name>ETFB_ARATH</name>
<organism>
    <name type="scientific">Arabidopsis thaliana</name>
    <name type="common">Mouse-ear cress</name>
    <dbReference type="NCBI Taxonomy" id="3702"/>
    <lineage>
        <taxon>Eukaryota</taxon>
        <taxon>Viridiplantae</taxon>
        <taxon>Streptophyta</taxon>
        <taxon>Embryophyta</taxon>
        <taxon>Tracheophyta</taxon>
        <taxon>Spermatophyta</taxon>
        <taxon>Magnoliopsida</taxon>
        <taxon>eudicotyledons</taxon>
        <taxon>Gunneridae</taxon>
        <taxon>Pentapetalae</taxon>
        <taxon>rosids</taxon>
        <taxon>malvids</taxon>
        <taxon>Brassicales</taxon>
        <taxon>Brassicaceae</taxon>
        <taxon>Camelineae</taxon>
        <taxon>Arabidopsis</taxon>
    </lineage>
</organism>
<sequence>MKILVAVKRVVDYAVKIRVKPDKTGVETQNVKMSMNPFCEIALEEALRIKEAGFAKEVIAVSIGPSQCVDTLRTGLAMGADRGIHVETNSIFLPLTIAKILKSLADVENPGLIFLGKQAIDDDCNQTGQMVAALLGWPQATFASKVVLDKDKNVATVDREVDGGLETLNVDLPAVITTDLRLNQPRYASLPNIMKAKSKPIKKMTVQDLKVDIKSDIEILEVTEPPKRKSGVMVSSVDELIDKLKNEAHVV</sequence>
<gene>
    <name type="primary">ETFB</name>
    <name type="ordered locus">At5g43430</name>
    <name type="ORF">MWF20.14</name>
</gene>